<comment type="similarity">
    <text evidence="1">Belongs to the bacterial ribosomal protein bL32 family.</text>
</comment>
<feature type="chain" id="PRO_0000296445" description="Large ribosomal subunit protein bL32">
    <location>
        <begin position="1"/>
        <end position="63"/>
    </location>
</feature>
<feature type="region of interest" description="Disordered" evidence="2">
    <location>
        <begin position="1"/>
        <end position="27"/>
    </location>
</feature>
<feature type="compositionally biased region" description="Basic residues" evidence="2">
    <location>
        <begin position="7"/>
        <end position="18"/>
    </location>
</feature>
<name>RL32_CHLPD</name>
<keyword id="KW-1185">Reference proteome</keyword>
<keyword id="KW-0687">Ribonucleoprotein</keyword>
<keyword id="KW-0689">Ribosomal protein</keyword>
<proteinExistence type="inferred from homology"/>
<evidence type="ECO:0000255" key="1">
    <source>
        <dbReference type="HAMAP-Rule" id="MF_00340"/>
    </source>
</evidence>
<evidence type="ECO:0000256" key="2">
    <source>
        <dbReference type="SAM" id="MobiDB-lite"/>
    </source>
</evidence>
<evidence type="ECO:0000305" key="3"/>
<accession>A1BJ99</accession>
<protein>
    <recommendedName>
        <fullName evidence="1">Large ribosomal subunit protein bL32</fullName>
    </recommendedName>
    <alternativeName>
        <fullName evidence="3">50S ribosomal protein L32</fullName>
    </alternativeName>
</protein>
<dbReference type="EMBL" id="CP000492">
    <property type="protein sequence ID" value="ABL66476.1"/>
    <property type="molecule type" value="Genomic_DNA"/>
</dbReference>
<dbReference type="RefSeq" id="WP_011746253.1">
    <property type="nucleotide sequence ID" value="NC_008639.1"/>
</dbReference>
<dbReference type="SMR" id="A1BJ99"/>
<dbReference type="STRING" id="290317.Cpha266_2488"/>
<dbReference type="KEGG" id="cph:Cpha266_2488"/>
<dbReference type="eggNOG" id="COG0333">
    <property type="taxonomic scope" value="Bacteria"/>
</dbReference>
<dbReference type="HOGENOM" id="CLU_129084_1_3_10"/>
<dbReference type="OrthoDB" id="9812874at2"/>
<dbReference type="Proteomes" id="UP000008701">
    <property type="component" value="Chromosome"/>
</dbReference>
<dbReference type="GO" id="GO:0015934">
    <property type="term" value="C:large ribosomal subunit"/>
    <property type="evidence" value="ECO:0007669"/>
    <property type="project" value="InterPro"/>
</dbReference>
<dbReference type="GO" id="GO:0003735">
    <property type="term" value="F:structural constituent of ribosome"/>
    <property type="evidence" value="ECO:0007669"/>
    <property type="project" value="InterPro"/>
</dbReference>
<dbReference type="GO" id="GO:0006412">
    <property type="term" value="P:translation"/>
    <property type="evidence" value="ECO:0007669"/>
    <property type="project" value="UniProtKB-UniRule"/>
</dbReference>
<dbReference type="HAMAP" id="MF_00340">
    <property type="entry name" value="Ribosomal_bL32"/>
    <property type="match status" value="1"/>
</dbReference>
<dbReference type="InterPro" id="IPR002677">
    <property type="entry name" value="Ribosomal_bL32"/>
</dbReference>
<dbReference type="InterPro" id="IPR044957">
    <property type="entry name" value="Ribosomal_bL32_bact"/>
</dbReference>
<dbReference type="InterPro" id="IPR011332">
    <property type="entry name" value="Ribosomal_zn-bd"/>
</dbReference>
<dbReference type="NCBIfam" id="TIGR01031">
    <property type="entry name" value="rpmF_bact"/>
    <property type="match status" value="1"/>
</dbReference>
<dbReference type="PANTHER" id="PTHR35534">
    <property type="entry name" value="50S RIBOSOMAL PROTEIN L32"/>
    <property type="match status" value="1"/>
</dbReference>
<dbReference type="PANTHER" id="PTHR35534:SF1">
    <property type="entry name" value="LARGE RIBOSOMAL SUBUNIT PROTEIN BL32"/>
    <property type="match status" value="1"/>
</dbReference>
<dbReference type="Pfam" id="PF01783">
    <property type="entry name" value="Ribosomal_L32p"/>
    <property type="match status" value="1"/>
</dbReference>
<dbReference type="SUPFAM" id="SSF57829">
    <property type="entry name" value="Zn-binding ribosomal proteins"/>
    <property type="match status" value="1"/>
</dbReference>
<organism>
    <name type="scientific">Chlorobium phaeobacteroides (strain DSM 266 / SMG 266 / 2430)</name>
    <dbReference type="NCBI Taxonomy" id="290317"/>
    <lineage>
        <taxon>Bacteria</taxon>
        <taxon>Pseudomonadati</taxon>
        <taxon>Chlorobiota</taxon>
        <taxon>Chlorobiia</taxon>
        <taxon>Chlorobiales</taxon>
        <taxon>Chlorobiaceae</taxon>
        <taxon>Chlorobium/Pelodictyon group</taxon>
        <taxon>Chlorobium</taxon>
    </lineage>
</organism>
<reference key="1">
    <citation type="submission" date="2006-12" db="EMBL/GenBank/DDBJ databases">
        <title>Complete sequence of Chlorobium phaeobacteroides DSM 266.</title>
        <authorList>
            <consortium name="US DOE Joint Genome Institute"/>
            <person name="Copeland A."/>
            <person name="Lucas S."/>
            <person name="Lapidus A."/>
            <person name="Barry K."/>
            <person name="Detter J.C."/>
            <person name="Glavina del Rio T."/>
            <person name="Hammon N."/>
            <person name="Israni S."/>
            <person name="Pitluck S."/>
            <person name="Goltsman E."/>
            <person name="Schmutz J."/>
            <person name="Larimer F."/>
            <person name="Land M."/>
            <person name="Hauser L."/>
            <person name="Mikhailova N."/>
            <person name="Li T."/>
            <person name="Overmann J."/>
            <person name="Bryant D.A."/>
            <person name="Richardson P."/>
        </authorList>
    </citation>
    <scope>NUCLEOTIDE SEQUENCE [LARGE SCALE GENOMIC DNA]</scope>
    <source>
        <strain>DSM 266 / SMG 266 / 2430</strain>
    </source>
</reference>
<gene>
    <name evidence="1" type="primary">rpmF</name>
    <name type="ordered locus">Cpha266_2488</name>
</gene>
<sequence>MANPKAKMSKSRRDKRRAQFNARTKPVTTVNCPNCGEPTLPHRACRHCGHYRGRAVTGKTANG</sequence>